<accession>B1LV19</accession>
<reference key="1">
    <citation type="submission" date="2008-03" db="EMBL/GenBank/DDBJ databases">
        <title>Complete sequence of chromosome of Methylobacterium radiotolerans JCM 2831.</title>
        <authorList>
            <consortium name="US DOE Joint Genome Institute"/>
            <person name="Copeland A."/>
            <person name="Lucas S."/>
            <person name="Lapidus A."/>
            <person name="Glavina del Rio T."/>
            <person name="Dalin E."/>
            <person name="Tice H."/>
            <person name="Bruce D."/>
            <person name="Goodwin L."/>
            <person name="Pitluck S."/>
            <person name="Kiss H."/>
            <person name="Brettin T."/>
            <person name="Detter J.C."/>
            <person name="Han C."/>
            <person name="Kuske C.R."/>
            <person name="Schmutz J."/>
            <person name="Larimer F."/>
            <person name="Land M."/>
            <person name="Hauser L."/>
            <person name="Kyrpides N."/>
            <person name="Mikhailova N."/>
            <person name="Marx C.J."/>
            <person name="Richardson P."/>
        </authorList>
    </citation>
    <scope>NUCLEOTIDE SEQUENCE [LARGE SCALE GENOMIC DNA]</scope>
    <source>
        <strain>ATCC 27329 / DSM 1819 / JCM 2831 / NBRC 15690 / NCIMB 10815 / 0-1</strain>
    </source>
</reference>
<sequence>MSATSLPGSQQPDLGEIRHDWSVAEIRAIHDLPLMDLVFRAAQVHRRHNDPADIQRASLLSIKTGGCPEDCAYCPQSAHHKGAGVARERLMPVETVLAEAAAAKAAGAQRFCMGAAWRQPKDGPEFDAVLAMVRGVRGLGMEACVTLGMLTPSQAGRLAEAGLTSYNHNLDTGPDFYEDIISTRTYDERLQTLANVREAGIGVCCGGIVGMGEGVTDRAAMLQVLANHAPHPESVPINALVAVPGTPLEDQPAVDPFDLVRMCATARIVMPRSRVRLSAGRKSLTREAQVLCFLAGANSIFYGERLLTTANNGQDDDAALLADLGIRVGEPVRAAAE</sequence>
<gene>
    <name evidence="1" type="primary">bioB</name>
    <name type="ordered locus">Mrad2831_5067</name>
</gene>
<comment type="function">
    <text evidence="1">Catalyzes the conversion of dethiobiotin (DTB) to biotin by the insertion of a sulfur atom into dethiobiotin via a radical-based mechanism.</text>
</comment>
<comment type="catalytic activity">
    <reaction evidence="1">
        <text>(4R,5S)-dethiobiotin + (sulfur carrier)-SH + 2 reduced [2Fe-2S]-[ferredoxin] + 2 S-adenosyl-L-methionine = (sulfur carrier)-H + biotin + 2 5'-deoxyadenosine + 2 L-methionine + 2 oxidized [2Fe-2S]-[ferredoxin]</text>
        <dbReference type="Rhea" id="RHEA:22060"/>
        <dbReference type="Rhea" id="RHEA-COMP:10000"/>
        <dbReference type="Rhea" id="RHEA-COMP:10001"/>
        <dbReference type="Rhea" id="RHEA-COMP:14737"/>
        <dbReference type="Rhea" id="RHEA-COMP:14739"/>
        <dbReference type="ChEBI" id="CHEBI:17319"/>
        <dbReference type="ChEBI" id="CHEBI:29917"/>
        <dbReference type="ChEBI" id="CHEBI:33737"/>
        <dbReference type="ChEBI" id="CHEBI:33738"/>
        <dbReference type="ChEBI" id="CHEBI:57586"/>
        <dbReference type="ChEBI" id="CHEBI:57844"/>
        <dbReference type="ChEBI" id="CHEBI:59789"/>
        <dbReference type="ChEBI" id="CHEBI:64428"/>
        <dbReference type="ChEBI" id="CHEBI:149473"/>
        <dbReference type="EC" id="2.8.1.6"/>
    </reaction>
</comment>
<comment type="cofactor">
    <cofactor evidence="1">
        <name>[4Fe-4S] cluster</name>
        <dbReference type="ChEBI" id="CHEBI:49883"/>
    </cofactor>
    <text evidence="1">Binds 1 [4Fe-4S] cluster. The cluster is coordinated with 3 cysteines and an exchangeable S-adenosyl-L-methionine.</text>
</comment>
<comment type="cofactor">
    <cofactor evidence="1">
        <name>[2Fe-2S] cluster</name>
        <dbReference type="ChEBI" id="CHEBI:190135"/>
    </cofactor>
    <text evidence="1">Binds 1 [2Fe-2S] cluster. The cluster is coordinated with 3 cysteines and 1 arginine.</text>
</comment>
<comment type="pathway">
    <text evidence="1">Cofactor biosynthesis; biotin biosynthesis; biotin from 7,8-diaminononanoate: step 2/2.</text>
</comment>
<comment type="subunit">
    <text evidence="1">Homodimer.</text>
</comment>
<comment type="similarity">
    <text evidence="1">Belongs to the radical SAM superfamily. Biotin synthase family.</text>
</comment>
<proteinExistence type="inferred from homology"/>
<protein>
    <recommendedName>
        <fullName evidence="1">Biotin synthase</fullName>
        <ecNumber evidence="1">2.8.1.6</ecNumber>
    </recommendedName>
</protein>
<organism>
    <name type="scientific">Methylobacterium radiotolerans (strain ATCC 27329 / DSM 1819 / JCM 2831 / NBRC 15690 / NCIMB 10815 / 0-1)</name>
    <dbReference type="NCBI Taxonomy" id="426355"/>
    <lineage>
        <taxon>Bacteria</taxon>
        <taxon>Pseudomonadati</taxon>
        <taxon>Pseudomonadota</taxon>
        <taxon>Alphaproteobacteria</taxon>
        <taxon>Hyphomicrobiales</taxon>
        <taxon>Methylobacteriaceae</taxon>
        <taxon>Methylobacterium</taxon>
    </lineage>
</organism>
<dbReference type="EC" id="2.8.1.6" evidence="1"/>
<dbReference type="EMBL" id="CP001001">
    <property type="protein sequence ID" value="ACB27025.1"/>
    <property type="molecule type" value="Genomic_DNA"/>
</dbReference>
<dbReference type="RefSeq" id="WP_012321972.1">
    <property type="nucleotide sequence ID" value="NC_010505.1"/>
</dbReference>
<dbReference type="SMR" id="B1LV19"/>
<dbReference type="STRING" id="426355.Mrad2831_5067"/>
<dbReference type="GeneID" id="6141135"/>
<dbReference type="KEGG" id="mrd:Mrad2831_5067"/>
<dbReference type="eggNOG" id="COG0502">
    <property type="taxonomic scope" value="Bacteria"/>
</dbReference>
<dbReference type="HOGENOM" id="CLU_033172_1_2_5"/>
<dbReference type="OrthoDB" id="9786826at2"/>
<dbReference type="UniPathway" id="UPA00078">
    <property type="reaction ID" value="UER00162"/>
</dbReference>
<dbReference type="Proteomes" id="UP000006589">
    <property type="component" value="Chromosome"/>
</dbReference>
<dbReference type="GO" id="GO:0051537">
    <property type="term" value="F:2 iron, 2 sulfur cluster binding"/>
    <property type="evidence" value="ECO:0007669"/>
    <property type="project" value="UniProtKB-KW"/>
</dbReference>
<dbReference type="GO" id="GO:0051539">
    <property type="term" value="F:4 iron, 4 sulfur cluster binding"/>
    <property type="evidence" value="ECO:0007669"/>
    <property type="project" value="UniProtKB-KW"/>
</dbReference>
<dbReference type="GO" id="GO:0004076">
    <property type="term" value="F:biotin synthase activity"/>
    <property type="evidence" value="ECO:0007669"/>
    <property type="project" value="UniProtKB-UniRule"/>
</dbReference>
<dbReference type="GO" id="GO:0005506">
    <property type="term" value="F:iron ion binding"/>
    <property type="evidence" value="ECO:0007669"/>
    <property type="project" value="UniProtKB-UniRule"/>
</dbReference>
<dbReference type="GO" id="GO:0009102">
    <property type="term" value="P:biotin biosynthetic process"/>
    <property type="evidence" value="ECO:0007669"/>
    <property type="project" value="UniProtKB-UniRule"/>
</dbReference>
<dbReference type="CDD" id="cd01335">
    <property type="entry name" value="Radical_SAM"/>
    <property type="match status" value="1"/>
</dbReference>
<dbReference type="Gene3D" id="3.20.20.70">
    <property type="entry name" value="Aldolase class I"/>
    <property type="match status" value="1"/>
</dbReference>
<dbReference type="HAMAP" id="MF_01694">
    <property type="entry name" value="BioB"/>
    <property type="match status" value="1"/>
</dbReference>
<dbReference type="InterPro" id="IPR013785">
    <property type="entry name" value="Aldolase_TIM"/>
</dbReference>
<dbReference type="InterPro" id="IPR010722">
    <property type="entry name" value="BATS_dom"/>
</dbReference>
<dbReference type="InterPro" id="IPR002684">
    <property type="entry name" value="Biotin_synth/BioAB"/>
</dbReference>
<dbReference type="InterPro" id="IPR024177">
    <property type="entry name" value="Biotin_synthase"/>
</dbReference>
<dbReference type="InterPro" id="IPR006638">
    <property type="entry name" value="Elp3/MiaA/NifB-like_rSAM"/>
</dbReference>
<dbReference type="InterPro" id="IPR007197">
    <property type="entry name" value="rSAM"/>
</dbReference>
<dbReference type="NCBIfam" id="TIGR00433">
    <property type="entry name" value="bioB"/>
    <property type="match status" value="1"/>
</dbReference>
<dbReference type="PANTHER" id="PTHR22976">
    <property type="entry name" value="BIOTIN SYNTHASE"/>
    <property type="match status" value="1"/>
</dbReference>
<dbReference type="PANTHER" id="PTHR22976:SF2">
    <property type="entry name" value="BIOTIN SYNTHASE, MITOCHONDRIAL"/>
    <property type="match status" value="1"/>
</dbReference>
<dbReference type="Pfam" id="PF06968">
    <property type="entry name" value="BATS"/>
    <property type="match status" value="1"/>
</dbReference>
<dbReference type="Pfam" id="PF04055">
    <property type="entry name" value="Radical_SAM"/>
    <property type="match status" value="1"/>
</dbReference>
<dbReference type="PIRSF" id="PIRSF001619">
    <property type="entry name" value="Biotin_synth"/>
    <property type="match status" value="1"/>
</dbReference>
<dbReference type="SFLD" id="SFLDF00272">
    <property type="entry name" value="biotin_synthase"/>
    <property type="match status" value="1"/>
</dbReference>
<dbReference type="SFLD" id="SFLDG01278">
    <property type="entry name" value="biotin_synthase_like"/>
    <property type="match status" value="1"/>
</dbReference>
<dbReference type="SMART" id="SM00876">
    <property type="entry name" value="BATS"/>
    <property type="match status" value="1"/>
</dbReference>
<dbReference type="SMART" id="SM00729">
    <property type="entry name" value="Elp3"/>
    <property type="match status" value="1"/>
</dbReference>
<dbReference type="SUPFAM" id="SSF102114">
    <property type="entry name" value="Radical SAM enzymes"/>
    <property type="match status" value="1"/>
</dbReference>
<dbReference type="PROSITE" id="PS51918">
    <property type="entry name" value="RADICAL_SAM"/>
    <property type="match status" value="1"/>
</dbReference>
<keyword id="KW-0001">2Fe-2S</keyword>
<keyword id="KW-0004">4Fe-4S</keyword>
<keyword id="KW-0093">Biotin biosynthesis</keyword>
<keyword id="KW-0408">Iron</keyword>
<keyword id="KW-0411">Iron-sulfur</keyword>
<keyword id="KW-0479">Metal-binding</keyword>
<keyword id="KW-0949">S-adenosyl-L-methionine</keyword>
<keyword id="KW-0808">Transferase</keyword>
<name>BIOB_METRJ</name>
<evidence type="ECO:0000255" key="1">
    <source>
        <dbReference type="HAMAP-Rule" id="MF_01694"/>
    </source>
</evidence>
<evidence type="ECO:0000255" key="2">
    <source>
        <dbReference type="PROSITE-ProRule" id="PRU01266"/>
    </source>
</evidence>
<feature type="chain" id="PRO_0000381470" description="Biotin synthase">
    <location>
        <begin position="1"/>
        <end position="337"/>
    </location>
</feature>
<feature type="domain" description="Radical SAM core" evidence="2">
    <location>
        <begin position="52"/>
        <end position="281"/>
    </location>
</feature>
<feature type="binding site" evidence="1">
    <location>
        <position position="67"/>
    </location>
    <ligand>
        <name>[4Fe-4S] cluster</name>
        <dbReference type="ChEBI" id="CHEBI:49883"/>
        <note>4Fe-4S-S-AdoMet</note>
    </ligand>
</feature>
<feature type="binding site" evidence="1">
    <location>
        <position position="71"/>
    </location>
    <ligand>
        <name>[4Fe-4S] cluster</name>
        <dbReference type="ChEBI" id="CHEBI:49883"/>
        <note>4Fe-4S-S-AdoMet</note>
    </ligand>
</feature>
<feature type="binding site" evidence="1">
    <location>
        <position position="74"/>
    </location>
    <ligand>
        <name>[4Fe-4S] cluster</name>
        <dbReference type="ChEBI" id="CHEBI:49883"/>
        <note>4Fe-4S-S-AdoMet</note>
    </ligand>
</feature>
<feature type="binding site" evidence="1">
    <location>
        <position position="112"/>
    </location>
    <ligand>
        <name>[2Fe-2S] cluster</name>
        <dbReference type="ChEBI" id="CHEBI:190135"/>
    </ligand>
</feature>
<feature type="binding site" evidence="1">
    <location>
        <position position="144"/>
    </location>
    <ligand>
        <name>[2Fe-2S] cluster</name>
        <dbReference type="ChEBI" id="CHEBI:190135"/>
    </ligand>
</feature>
<feature type="binding site" evidence="1">
    <location>
        <position position="204"/>
    </location>
    <ligand>
        <name>[2Fe-2S] cluster</name>
        <dbReference type="ChEBI" id="CHEBI:190135"/>
    </ligand>
</feature>
<feature type="binding site" evidence="1">
    <location>
        <position position="276"/>
    </location>
    <ligand>
        <name>[2Fe-2S] cluster</name>
        <dbReference type="ChEBI" id="CHEBI:190135"/>
    </ligand>
</feature>